<protein>
    <recommendedName>
        <fullName evidence="1">Ribosome-binding factor A</fullName>
    </recommendedName>
</protein>
<sequence length="133" mass="14832">MAKEYSRTQRIGDQMQRELAQLIRREVKDPRVGLVTITAVEVSRDVGHAKIFITVMGQENAEQIAQSIKVLNSAAGFLRMQLAKEMKLRSVPQLHFHYDESVARGAHLSALIERAVAEDSQHGDAPAPEDAKE</sequence>
<keyword id="KW-0963">Cytoplasm</keyword>
<keyword id="KW-0690">Ribosome biogenesis</keyword>
<reference key="1">
    <citation type="journal article" date="2005" name="Nat. Biotechnol.">
        <title>Complete genome sequence of the plant commensal Pseudomonas fluorescens Pf-5.</title>
        <authorList>
            <person name="Paulsen I.T."/>
            <person name="Press C.M."/>
            <person name="Ravel J."/>
            <person name="Kobayashi D.Y."/>
            <person name="Myers G.S.A."/>
            <person name="Mavrodi D.V."/>
            <person name="DeBoy R.T."/>
            <person name="Seshadri R."/>
            <person name="Ren Q."/>
            <person name="Madupu R."/>
            <person name="Dodson R.J."/>
            <person name="Durkin A.S."/>
            <person name="Brinkac L.M."/>
            <person name="Daugherty S.C."/>
            <person name="Sullivan S.A."/>
            <person name="Rosovitz M.J."/>
            <person name="Gwinn M.L."/>
            <person name="Zhou L."/>
            <person name="Schneider D.J."/>
            <person name="Cartinhour S.W."/>
            <person name="Nelson W.C."/>
            <person name="Weidman J."/>
            <person name="Watkins K."/>
            <person name="Tran K."/>
            <person name="Khouri H."/>
            <person name="Pierson E.A."/>
            <person name="Pierson L.S. III"/>
            <person name="Thomashow L.S."/>
            <person name="Loper J.E."/>
        </authorList>
    </citation>
    <scope>NUCLEOTIDE SEQUENCE [LARGE SCALE GENOMIC DNA]</scope>
    <source>
        <strain>ATCC BAA-477 / NRRL B-23932 / Pf-5</strain>
    </source>
</reference>
<comment type="function">
    <text evidence="1">One of several proteins that assist in the late maturation steps of the functional core of the 30S ribosomal subunit. Associates with free 30S ribosomal subunits (but not with 30S subunits that are part of 70S ribosomes or polysomes). Required for efficient processing of 16S rRNA. May interact with the 5'-terminal helix region of 16S rRNA.</text>
</comment>
<comment type="subunit">
    <text evidence="1">Monomer. Binds 30S ribosomal subunits, but not 50S ribosomal subunits or 70S ribosomes.</text>
</comment>
<comment type="subcellular location">
    <subcellularLocation>
        <location evidence="1">Cytoplasm</location>
    </subcellularLocation>
</comment>
<comment type="similarity">
    <text evidence="1">Belongs to the RbfA family.</text>
</comment>
<accession>Q4KIF5</accession>
<evidence type="ECO:0000255" key="1">
    <source>
        <dbReference type="HAMAP-Rule" id="MF_00003"/>
    </source>
</evidence>
<name>RBFA_PSEF5</name>
<gene>
    <name evidence="1" type="primary">rbfA</name>
    <name type="ordered locus">PFL_0845</name>
</gene>
<proteinExistence type="inferred from homology"/>
<feature type="chain" id="PRO_1000000176" description="Ribosome-binding factor A">
    <location>
        <begin position="1"/>
        <end position="133"/>
    </location>
</feature>
<organism>
    <name type="scientific">Pseudomonas fluorescens (strain ATCC BAA-477 / NRRL B-23932 / Pf-5)</name>
    <dbReference type="NCBI Taxonomy" id="220664"/>
    <lineage>
        <taxon>Bacteria</taxon>
        <taxon>Pseudomonadati</taxon>
        <taxon>Pseudomonadota</taxon>
        <taxon>Gammaproteobacteria</taxon>
        <taxon>Pseudomonadales</taxon>
        <taxon>Pseudomonadaceae</taxon>
        <taxon>Pseudomonas</taxon>
    </lineage>
</organism>
<dbReference type="EMBL" id="CP000076">
    <property type="protein sequence ID" value="AAY96243.1"/>
    <property type="molecule type" value="Genomic_DNA"/>
</dbReference>
<dbReference type="RefSeq" id="WP_011059203.1">
    <property type="nucleotide sequence ID" value="NC_004129.6"/>
</dbReference>
<dbReference type="SMR" id="Q4KIF5"/>
<dbReference type="STRING" id="220664.PFL_0845"/>
<dbReference type="GeneID" id="57473846"/>
<dbReference type="KEGG" id="pfl:PFL_0845"/>
<dbReference type="PATRIC" id="fig|220664.5.peg.865"/>
<dbReference type="eggNOG" id="COG0858">
    <property type="taxonomic scope" value="Bacteria"/>
</dbReference>
<dbReference type="HOGENOM" id="CLU_089475_5_0_6"/>
<dbReference type="Proteomes" id="UP000008540">
    <property type="component" value="Chromosome"/>
</dbReference>
<dbReference type="GO" id="GO:0005829">
    <property type="term" value="C:cytosol"/>
    <property type="evidence" value="ECO:0007669"/>
    <property type="project" value="TreeGrafter"/>
</dbReference>
<dbReference type="GO" id="GO:0043024">
    <property type="term" value="F:ribosomal small subunit binding"/>
    <property type="evidence" value="ECO:0007669"/>
    <property type="project" value="TreeGrafter"/>
</dbReference>
<dbReference type="GO" id="GO:0030490">
    <property type="term" value="P:maturation of SSU-rRNA"/>
    <property type="evidence" value="ECO:0007669"/>
    <property type="project" value="UniProtKB-UniRule"/>
</dbReference>
<dbReference type="Gene3D" id="3.30.300.20">
    <property type="match status" value="1"/>
</dbReference>
<dbReference type="HAMAP" id="MF_00003">
    <property type="entry name" value="RbfA"/>
    <property type="match status" value="1"/>
</dbReference>
<dbReference type="InterPro" id="IPR015946">
    <property type="entry name" value="KH_dom-like_a/b"/>
</dbReference>
<dbReference type="InterPro" id="IPR000238">
    <property type="entry name" value="RbfA"/>
</dbReference>
<dbReference type="InterPro" id="IPR023799">
    <property type="entry name" value="RbfA_dom_sf"/>
</dbReference>
<dbReference type="InterPro" id="IPR020053">
    <property type="entry name" value="Ribosome-bd_factorA_CS"/>
</dbReference>
<dbReference type="NCBIfam" id="TIGR00082">
    <property type="entry name" value="rbfA"/>
    <property type="match status" value="1"/>
</dbReference>
<dbReference type="PANTHER" id="PTHR33515">
    <property type="entry name" value="RIBOSOME-BINDING FACTOR A, CHLOROPLASTIC-RELATED"/>
    <property type="match status" value="1"/>
</dbReference>
<dbReference type="PANTHER" id="PTHR33515:SF1">
    <property type="entry name" value="RIBOSOME-BINDING FACTOR A, CHLOROPLASTIC-RELATED"/>
    <property type="match status" value="1"/>
</dbReference>
<dbReference type="Pfam" id="PF02033">
    <property type="entry name" value="RBFA"/>
    <property type="match status" value="1"/>
</dbReference>
<dbReference type="SUPFAM" id="SSF89919">
    <property type="entry name" value="Ribosome-binding factor A, RbfA"/>
    <property type="match status" value="1"/>
</dbReference>
<dbReference type="PROSITE" id="PS01319">
    <property type="entry name" value="RBFA"/>
    <property type="match status" value="1"/>
</dbReference>